<accession>A0LLI5</accession>
<name>COBS_SYNFM</name>
<evidence type="ECO:0000255" key="1">
    <source>
        <dbReference type="HAMAP-Rule" id="MF_00719"/>
    </source>
</evidence>
<reference key="1">
    <citation type="submission" date="2006-10" db="EMBL/GenBank/DDBJ databases">
        <title>Complete sequence of Syntrophobacter fumaroxidans MPOB.</title>
        <authorList>
            <consortium name="US DOE Joint Genome Institute"/>
            <person name="Copeland A."/>
            <person name="Lucas S."/>
            <person name="Lapidus A."/>
            <person name="Barry K."/>
            <person name="Detter J.C."/>
            <person name="Glavina del Rio T."/>
            <person name="Hammon N."/>
            <person name="Israni S."/>
            <person name="Pitluck S."/>
            <person name="Goltsman E.G."/>
            <person name="Martinez M."/>
            <person name="Schmutz J."/>
            <person name="Larimer F."/>
            <person name="Land M."/>
            <person name="Hauser L."/>
            <person name="Kyrpides N."/>
            <person name="Kim E."/>
            <person name="Boone D.R."/>
            <person name="Brockman F."/>
            <person name="Culley D."/>
            <person name="Ferry J."/>
            <person name="Gunsalus R."/>
            <person name="McInerney M.J."/>
            <person name="Morrison M."/>
            <person name="Plugge C."/>
            <person name="Rohlin L."/>
            <person name="Scholten J."/>
            <person name="Sieber J."/>
            <person name="Stams A.J.M."/>
            <person name="Worm P."/>
            <person name="Henstra A.M."/>
            <person name="Richardson P."/>
        </authorList>
    </citation>
    <scope>NUCLEOTIDE SEQUENCE [LARGE SCALE GENOMIC DNA]</scope>
    <source>
        <strain>DSM 10017 / MPOB</strain>
    </source>
</reference>
<dbReference type="EC" id="2.7.8.26" evidence="1"/>
<dbReference type="EMBL" id="CP000478">
    <property type="protein sequence ID" value="ABK18287.1"/>
    <property type="molecule type" value="Genomic_DNA"/>
</dbReference>
<dbReference type="RefSeq" id="WP_011699454.1">
    <property type="nucleotide sequence ID" value="NC_008554.1"/>
</dbReference>
<dbReference type="FunCoup" id="A0LLI5">
    <property type="interactions" value="209"/>
</dbReference>
<dbReference type="STRING" id="335543.Sfum_2609"/>
<dbReference type="KEGG" id="sfu:Sfum_2609"/>
<dbReference type="eggNOG" id="COG0368">
    <property type="taxonomic scope" value="Bacteria"/>
</dbReference>
<dbReference type="HOGENOM" id="CLU_057426_1_1_7"/>
<dbReference type="InParanoid" id="A0LLI5"/>
<dbReference type="OrthoDB" id="9794223at2"/>
<dbReference type="UniPathway" id="UPA00148">
    <property type="reaction ID" value="UER00238"/>
</dbReference>
<dbReference type="Proteomes" id="UP000001784">
    <property type="component" value="Chromosome"/>
</dbReference>
<dbReference type="GO" id="GO:0005886">
    <property type="term" value="C:plasma membrane"/>
    <property type="evidence" value="ECO:0007669"/>
    <property type="project" value="UniProtKB-SubCell"/>
</dbReference>
<dbReference type="GO" id="GO:0051073">
    <property type="term" value="F:adenosylcobinamide-GDP ribazoletransferase activity"/>
    <property type="evidence" value="ECO:0007669"/>
    <property type="project" value="UniProtKB-UniRule"/>
</dbReference>
<dbReference type="GO" id="GO:0008818">
    <property type="term" value="F:cobalamin 5'-phosphate synthase activity"/>
    <property type="evidence" value="ECO:0007669"/>
    <property type="project" value="UniProtKB-UniRule"/>
</dbReference>
<dbReference type="GO" id="GO:0009236">
    <property type="term" value="P:cobalamin biosynthetic process"/>
    <property type="evidence" value="ECO:0007669"/>
    <property type="project" value="UniProtKB-UniRule"/>
</dbReference>
<dbReference type="HAMAP" id="MF_00719">
    <property type="entry name" value="CobS"/>
    <property type="match status" value="1"/>
</dbReference>
<dbReference type="InterPro" id="IPR003805">
    <property type="entry name" value="CobS"/>
</dbReference>
<dbReference type="NCBIfam" id="TIGR00317">
    <property type="entry name" value="cobS"/>
    <property type="match status" value="1"/>
</dbReference>
<dbReference type="PANTHER" id="PTHR34148">
    <property type="entry name" value="ADENOSYLCOBINAMIDE-GDP RIBAZOLETRANSFERASE"/>
    <property type="match status" value="1"/>
</dbReference>
<dbReference type="PANTHER" id="PTHR34148:SF1">
    <property type="entry name" value="ADENOSYLCOBINAMIDE-GDP RIBAZOLETRANSFERASE"/>
    <property type="match status" value="1"/>
</dbReference>
<dbReference type="Pfam" id="PF02654">
    <property type="entry name" value="CobS"/>
    <property type="match status" value="1"/>
</dbReference>
<protein>
    <recommendedName>
        <fullName evidence="1">Adenosylcobinamide-GDP ribazoletransferase</fullName>
        <ecNumber evidence="1">2.7.8.26</ecNumber>
    </recommendedName>
    <alternativeName>
        <fullName evidence="1">Cobalamin synthase</fullName>
    </alternativeName>
    <alternativeName>
        <fullName evidence="1">Cobalamin-5'-phosphate synthase</fullName>
    </alternativeName>
</protein>
<sequence length="248" mass="26222">MWSHFGTALSFLTLFRLPFTSPRTLTPQELAESFSFFPLVGLILGFCYALPARVLSGVVPSLLLAVAITALTAVLTRALHLDGLADLADGVGGGYDPERRLEIMKDSRTGAFGALAIALAVAFKVAALDAVIRAGSFLPLLLVPVVSRLAMVLAAYRSPYARKEGGLGKPFLEHIARRHLLTALGLTAVSAFLVQPVFGLCALVLAAGTVPAFRLLCRRWLGGMTGDALGALNEIVEVLLLSAAACMY</sequence>
<gene>
    <name evidence="1" type="primary">cobS</name>
    <name type="ordered locus">Sfum_2609</name>
</gene>
<comment type="function">
    <text evidence="1">Joins adenosylcobinamide-GDP and alpha-ribazole to generate adenosylcobalamin (Ado-cobalamin). Also synthesizes adenosylcobalamin 5'-phosphate from adenosylcobinamide-GDP and alpha-ribazole 5'-phosphate.</text>
</comment>
<comment type="catalytic activity">
    <reaction evidence="1">
        <text>alpha-ribazole + adenosylcob(III)inamide-GDP = adenosylcob(III)alamin + GMP + H(+)</text>
        <dbReference type="Rhea" id="RHEA:16049"/>
        <dbReference type="ChEBI" id="CHEBI:10329"/>
        <dbReference type="ChEBI" id="CHEBI:15378"/>
        <dbReference type="ChEBI" id="CHEBI:18408"/>
        <dbReference type="ChEBI" id="CHEBI:58115"/>
        <dbReference type="ChEBI" id="CHEBI:60487"/>
        <dbReference type="EC" id="2.7.8.26"/>
    </reaction>
</comment>
<comment type="catalytic activity">
    <reaction evidence="1">
        <text>alpha-ribazole 5'-phosphate + adenosylcob(III)inamide-GDP = adenosylcob(III)alamin 5'-phosphate + GMP + H(+)</text>
        <dbReference type="Rhea" id="RHEA:23560"/>
        <dbReference type="ChEBI" id="CHEBI:15378"/>
        <dbReference type="ChEBI" id="CHEBI:57918"/>
        <dbReference type="ChEBI" id="CHEBI:58115"/>
        <dbReference type="ChEBI" id="CHEBI:60487"/>
        <dbReference type="ChEBI" id="CHEBI:60493"/>
        <dbReference type="EC" id="2.7.8.26"/>
    </reaction>
</comment>
<comment type="cofactor">
    <cofactor evidence="1">
        <name>Mg(2+)</name>
        <dbReference type="ChEBI" id="CHEBI:18420"/>
    </cofactor>
</comment>
<comment type="pathway">
    <text evidence="1">Cofactor biosynthesis; adenosylcobalamin biosynthesis; adenosylcobalamin from cob(II)yrinate a,c-diamide: step 7/7.</text>
</comment>
<comment type="subcellular location">
    <subcellularLocation>
        <location evidence="1">Cell inner membrane</location>
        <topology evidence="1">Multi-pass membrane protein</topology>
    </subcellularLocation>
</comment>
<comment type="similarity">
    <text evidence="1">Belongs to the CobS family.</text>
</comment>
<keyword id="KW-0997">Cell inner membrane</keyword>
<keyword id="KW-1003">Cell membrane</keyword>
<keyword id="KW-0169">Cobalamin biosynthesis</keyword>
<keyword id="KW-0460">Magnesium</keyword>
<keyword id="KW-0472">Membrane</keyword>
<keyword id="KW-1185">Reference proteome</keyword>
<keyword id="KW-0808">Transferase</keyword>
<keyword id="KW-0812">Transmembrane</keyword>
<keyword id="KW-1133">Transmembrane helix</keyword>
<proteinExistence type="inferred from homology"/>
<feature type="chain" id="PRO_1000189621" description="Adenosylcobinamide-GDP ribazoletransferase">
    <location>
        <begin position="1"/>
        <end position="248"/>
    </location>
</feature>
<feature type="transmembrane region" description="Helical" evidence="1">
    <location>
        <begin position="30"/>
        <end position="50"/>
    </location>
</feature>
<feature type="transmembrane region" description="Helical" evidence="1">
    <location>
        <begin position="54"/>
        <end position="74"/>
    </location>
</feature>
<feature type="transmembrane region" description="Helical" evidence="1">
    <location>
        <begin position="112"/>
        <end position="132"/>
    </location>
</feature>
<feature type="transmembrane region" description="Helical" evidence="1">
    <location>
        <begin position="134"/>
        <end position="154"/>
    </location>
</feature>
<feature type="transmembrane region" description="Helical" evidence="1">
    <location>
        <begin position="188"/>
        <end position="208"/>
    </location>
</feature>
<organism>
    <name type="scientific">Syntrophobacter fumaroxidans (strain DSM 10017 / MPOB)</name>
    <dbReference type="NCBI Taxonomy" id="335543"/>
    <lineage>
        <taxon>Bacteria</taxon>
        <taxon>Pseudomonadati</taxon>
        <taxon>Thermodesulfobacteriota</taxon>
        <taxon>Syntrophobacteria</taxon>
        <taxon>Syntrophobacterales</taxon>
        <taxon>Syntrophobacteraceae</taxon>
        <taxon>Syntrophobacter</taxon>
    </lineage>
</organism>